<gene>
    <name evidence="1" type="primary">L4</name>
</gene>
<feature type="chain" id="PRO_0000421403" description="Pre-hexon-linking protein VIII" evidence="1">
    <location>
        <begin position="1"/>
        <end position="155"/>
    </location>
</feature>
<feature type="peptide" id="PRO_0000421404" description="Hexon-linking protein-N" evidence="1">
    <location>
        <begin position="1"/>
        <end position="43"/>
    </location>
</feature>
<feature type="propeptide" id="PRO_0000421405" evidence="1">
    <location>
        <begin position="44"/>
        <end position="84"/>
    </location>
</feature>
<feature type="peptide" id="PRO_0000221841" description="Hexon-linking protein-C" evidence="1">
    <location>
        <begin position="85"/>
        <end position="155"/>
    </location>
</feature>
<feature type="site" description="Cleavage; by viral protease" evidence="1">
    <location>
        <begin position="43"/>
        <end position="44"/>
    </location>
</feature>
<feature type="site" description="Cleavage; by viral protease" evidence="1">
    <location>
        <begin position="84"/>
        <end position="85"/>
    </location>
</feature>
<sequence length="155" mass="16910">MNPPAWPASRLFQPVDTVQTLELPRNELLETAMTNSGMQLAGGGVHRTKDIKPEDLVGRGIQLNSYQPPTTRLKPERVFQLAGGSRSSFNPSINTLLTLQPAASVPRSGGIGEVQFVHEFVPSVYFQPFSGPPGSYPDEFIYNFDVATDSIDGYA</sequence>
<organismHost>
    <name type="scientific">Bos taurus</name>
    <name type="common">Bovine</name>
    <dbReference type="NCBI Taxonomy" id="9913"/>
</organismHost>
<keyword id="KW-0167">Capsid protein</keyword>
<keyword id="KW-1048">Host nucleus</keyword>
<keyword id="KW-0426">Late protein</keyword>
<keyword id="KW-0597">Phosphoprotein</keyword>
<keyword id="KW-1185">Reference proteome</keyword>
<keyword id="KW-0946">Virion</keyword>
<name>CAP8_ADEB2</name>
<reference key="1">
    <citation type="submission" date="2000-04" db="EMBL/GenBank/DDBJ databases">
        <title>Complete nucleotide sequence from bovine adenovirus type 2.</title>
        <authorList>
            <person name="Ojkic D."/>
            <person name="Bautista D.S."/>
            <person name="Haj-Ahmad Y."/>
        </authorList>
    </citation>
    <scope>NUCLEOTIDE SEQUENCE [GENOMIC DNA]</scope>
</reference>
<organism>
    <name type="scientific">Bovine adenovirus 2</name>
    <name type="common">BAdV-2</name>
    <name type="synonym">Mastadenovirus bos2</name>
    <dbReference type="NCBI Taxonomy" id="114429"/>
    <lineage>
        <taxon>Viruses</taxon>
        <taxon>Varidnaviria</taxon>
        <taxon>Bamfordvirae</taxon>
        <taxon>Preplasmiviricota</taxon>
        <taxon>Tectiliviricetes</taxon>
        <taxon>Rowavirales</taxon>
        <taxon>Adenoviridae</taxon>
        <taxon>Mastadenovirus</taxon>
        <taxon>Ovine mastadenovirus A</taxon>
    </lineage>
</organism>
<accession>Q89592</accession>
<protein>
    <recommendedName>
        <fullName evidence="1">Pre-hexon-linking protein VIII</fullName>
    </recommendedName>
    <alternativeName>
        <fullName evidence="1">Pre-protein VIII</fullName>
        <shortName evidence="1">pVIII</shortName>
    </alternativeName>
    <component>
        <recommendedName>
            <fullName evidence="1">Hexon-linking protein-N</fullName>
        </recommendedName>
        <alternativeName>
            <fullName evidence="1">12.1 kDa protein VIII</fullName>
        </alternativeName>
        <alternativeName>
            <fullName evidence="1">Protein VIII-N</fullName>
        </alternativeName>
    </component>
    <component>
        <recommendedName>
            <fullName evidence="1">Hexon-linking protein-C</fullName>
        </recommendedName>
        <alternativeName>
            <fullName evidence="1">7.6 kDa protein VIII</fullName>
        </alternativeName>
        <alternativeName>
            <fullName evidence="1">Protein VIII-C</fullName>
        </alternativeName>
    </component>
</protein>
<comment type="function">
    <molecule>Hexon-linking protein-N</molecule>
    <text evidence="1">Structural component of the virion that acts as a cement protein on the capsid interior and which glue the peripentonal hexons and group-of-nine hexons together.</text>
</comment>
<comment type="function">
    <molecule>Hexon-linking protein-C</molecule>
    <text evidence="1">Structural component of the virion that acts as a cement protein on the capsid interior and which glue the peripentonal hexons and group-of-nine hexons together.</text>
</comment>
<comment type="subunit">
    <text evidence="1">Interacts with the peripentonal hexons as well as the hexons in the facets. Part of a complex composed of the core-capsid bridging protein, the endosome lysis protein VI and the hexon-linking protein VIII; these interactions bridge the virus core to the capsid.</text>
</comment>
<comment type="subcellular location">
    <molecule>Hexon-linking protein-C</molecule>
    <subcellularLocation>
        <location evidence="1">Virion</location>
    </subcellularLocation>
    <text evidence="1">Located on the inner side of the capsid shell. Present in 120 copies per virion.</text>
</comment>
<comment type="subcellular location">
    <molecule>Pre-hexon-linking protein VIII</molecule>
    <subcellularLocation>
        <location evidence="1">Host nucleus</location>
    </subcellularLocation>
</comment>
<comment type="subcellular location">
    <molecule>Hexon-linking protein-N</molecule>
    <subcellularLocation>
        <location evidence="1">Virion</location>
    </subcellularLocation>
    <text evidence="1">Located on the inner side of the capsid shell. Present in 120 copies per virion.</text>
</comment>
<comment type="induction">
    <text evidence="1">Expressed in the late phase of the viral replicative cycle.</text>
</comment>
<comment type="PTM">
    <text evidence="1">Cleaved by the viral protease during virion maturation. May cause the middle segment to be shed from the capsid.</text>
</comment>
<comment type="miscellaneous">
    <text evidence="1">All late proteins expressed from the major late promoter are produced by alternative splicing and alternative polyadenylation of the same gene giving rise to non-overlapping ORFs. A leader sequence is present in the N-terminus of all these mRNAs and is recognized by the viral shutoff protein to provide expression although conventional translation via ribosome scanning from the cap has been shut off in the host cell.</text>
</comment>
<comment type="similarity">
    <text evidence="1 2">Belongs to the adenoviridae hexon-linking protein family.</text>
</comment>
<evidence type="ECO:0000255" key="1">
    <source>
        <dbReference type="HAMAP-Rule" id="MF_04049"/>
    </source>
</evidence>
<evidence type="ECO:0000305" key="2"/>
<dbReference type="EMBL" id="AF252854">
    <property type="protein sequence ID" value="AAF99659.1"/>
    <property type="molecule type" value="Genomic_DNA"/>
</dbReference>
<dbReference type="SMR" id="Q89592"/>
<dbReference type="KEGG" id="vg:1460757"/>
<dbReference type="OrthoDB" id="8443at10239"/>
<dbReference type="Proteomes" id="UP000154597">
    <property type="component" value="Genome"/>
</dbReference>
<dbReference type="GO" id="GO:0042025">
    <property type="term" value="C:host cell nucleus"/>
    <property type="evidence" value="ECO:0007669"/>
    <property type="project" value="UniProtKB-SubCell"/>
</dbReference>
<dbReference type="GO" id="GO:0019028">
    <property type="term" value="C:viral capsid"/>
    <property type="evidence" value="ECO:0007669"/>
    <property type="project" value="UniProtKB-UniRule"/>
</dbReference>
<dbReference type="GO" id="GO:0031423">
    <property type="term" value="F:hexon binding"/>
    <property type="evidence" value="ECO:0007669"/>
    <property type="project" value="InterPro"/>
</dbReference>
<dbReference type="HAMAP" id="MF_04049">
    <property type="entry name" value="ADV_CAP8"/>
    <property type="match status" value="1"/>
</dbReference>
<dbReference type="InterPro" id="IPR000646">
    <property type="entry name" value="Adeno_PVIII"/>
</dbReference>
<dbReference type="Pfam" id="PF01310">
    <property type="entry name" value="Adeno_PVIII"/>
    <property type="match status" value="1"/>
</dbReference>
<proteinExistence type="inferred from homology"/>